<gene>
    <name evidence="1" type="primary">leuD</name>
    <name type="ordered locus">SFV_0063</name>
</gene>
<protein>
    <recommendedName>
        <fullName evidence="1">3-isopropylmalate dehydratase small subunit</fullName>
        <ecNumber evidence="1">4.2.1.33</ecNumber>
    </recommendedName>
    <alternativeName>
        <fullName evidence="1">Alpha-IPM isomerase</fullName>
        <shortName evidence="1">IPMI</shortName>
    </alternativeName>
    <alternativeName>
        <fullName evidence="1">Isopropylmalate isomerase</fullName>
    </alternativeName>
</protein>
<comment type="function">
    <text evidence="1">Catalyzes the isomerization between 2-isopropylmalate and 3-isopropylmalate, via the formation of 2-isopropylmaleate.</text>
</comment>
<comment type="catalytic activity">
    <reaction evidence="1">
        <text>(2R,3S)-3-isopropylmalate = (2S)-2-isopropylmalate</text>
        <dbReference type="Rhea" id="RHEA:32287"/>
        <dbReference type="ChEBI" id="CHEBI:1178"/>
        <dbReference type="ChEBI" id="CHEBI:35121"/>
        <dbReference type="EC" id="4.2.1.33"/>
    </reaction>
</comment>
<comment type="pathway">
    <text evidence="1">Amino-acid biosynthesis; L-leucine biosynthesis; L-leucine from 3-methyl-2-oxobutanoate: step 2/4.</text>
</comment>
<comment type="subunit">
    <text evidence="1">Heterodimer of LeuC and LeuD.</text>
</comment>
<comment type="similarity">
    <text evidence="1">Belongs to the LeuD family. LeuD type 1 subfamily.</text>
</comment>
<reference key="1">
    <citation type="journal article" date="2006" name="BMC Genomics">
        <title>Complete genome sequence of Shigella flexneri 5b and comparison with Shigella flexneri 2a.</title>
        <authorList>
            <person name="Nie H."/>
            <person name="Yang F."/>
            <person name="Zhang X."/>
            <person name="Yang J."/>
            <person name="Chen L."/>
            <person name="Wang J."/>
            <person name="Xiong Z."/>
            <person name="Peng J."/>
            <person name="Sun L."/>
            <person name="Dong J."/>
            <person name="Xue Y."/>
            <person name="Xu X."/>
            <person name="Chen S."/>
            <person name="Yao Z."/>
            <person name="Shen Y."/>
            <person name="Jin Q."/>
        </authorList>
    </citation>
    <scope>NUCLEOTIDE SEQUENCE [LARGE SCALE GENOMIC DNA]</scope>
    <source>
        <strain>8401</strain>
    </source>
</reference>
<proteinExistence type="inferred from homology"/>
<sequence>MAEKFIKHTGLVVPLDAANVDTDAIIPKQFLQKVTRTGFGAHLFNDWRFLDEKGQQPNPDFVLNFPQYQGASILLARENFGCGSSREHAPWALTDYGFKVVIAPSFADIFYGNSFNNQLLPVKLSDAEVDELFALVKANPGIHFDVDLEAQEVKAGEKTYRFTIDAFRRHCMMNGLDSIGLTLQHDDAIASYEAKQPAFMN</sequence>
<feature type="chain" id="PRO_1000063841" description="3-isopropylmalate dehydratase small subunit">
    <location>
        <begin position="1"/>
        <end position="201"/>
    </location>
</feature>
<keyword id="KW-0028">Amino-acid biosynthesis</keyword>
<keyword id="KW-0100">Branched-chain amino acid biosynthesis</keyword>
<keyword id="KW-0432">Leucine biosynthesis</keyword>
<keyword id="KW-0456">Lyase</keyword>
<accession>Q0T8C7</accession>
<dbReference type="EC" id="4.2.1.33" evidence="1"/>
<dbReference type="EMBL" id="CP000266">
    <property type="protein sequence ID" value="ABF02349.1"/>
    <property type="molecule type" value="Genomic_DNA"/>
</dbReference>
<dbReference type="RefSeq" id="WP_000818230.1">
    <property type="nucleotide sequence ID" value="NC_008258.1"/>
</dbReference>
<dbReference type="SMR" id="Q0T8C7"/>
<dbReference type="KEGG" id="sfv:SFV_0063"/>
<dbReference type="HOGENOM" id="CLU_081378_0_3_6"/>
<dbReference type="UniPathway" id="UPA00048">
    <property type="reaction ID" value="UER00071"/>
</dbReference>
<dbReference type="Proteomes" id="UP000000659">
    <property type="component" value="Chromosome"/>
</dbReference>
<dbReference type="GO" id="GO:0009316">
    <property type="term" value="C:3-isopropylmalate dehydratase complex"/>
    <property type="evidence" value="ECO:0007669"/>
    <property type="project" value="InterPro"/>
</dbReference>
<dbReference type="GO" id="GO:0003861">
    <property type="term" value="F:3-isopropylmalate dehydratase activity"/>
    <property type="evidence" value="ECO:0007669"/>
    <property type="project" value="UniProtKB-UniRule"/>
</dbReference>
<dbReference type="GO" id="GO:0009098">
    <property type="term" value="P:L-leucine biosynthetic process"/>
    <property type="evidence" value="ECO:0007669"/>
    <property type="project" value="UniProtKB-UniRule"/>
</dbReference>
<dbReference type="CDD" id="cd01577">
    <property type="entry name" value="IPMI_Swivel"/>
    <property type="match status" value="1"/>
</dbReference>
<dbReference type="FunFam" id="3.20.19.10:FF:000003">
    <property type="entry name" value="3-isopropylmalate dehydratase small subunit"/>
    <property type="match status" value="1"/>
</dbReference>
<dbReference type="Gene3D" id="3.20.19.10">
    <property type="entry name" value="Aconitase, domain 4"/>
    <property type="match status" value="1"/>
</dbReference>
<dbReference type="HAMAP" id="MF_01031">
    <property type="entry name" value="LeuD_type1"/>
    <property type="match status" value="1"/>
</dbReference>
<dbReference type="InterPro" id="IPR004431">
    <property type="entry name" value="3-IsopropMal_deHydase_ssu"/>
</dbReference>
<dbReference type="InterPro" id="IPR015928">
    <property type="entry name" value="Aconitase/3IPM_dehydase_swvl"/>
</dbReference>
<dbReference type="InterPro" id="IPR000573">
    <property type="entry name" value="AconitaseA/IPMdHydase_ssu_swvl"/>
</dbReference>
<dbReference type="InterPro" id="IPR033940">
    <property type="entry name" value="IPMI_Swivel"/>
</dbReference>
<dbReference type="InterPro" id="IPR050075">
    <property type="entry name" value="LeuD"/>
</dbReference>
<dbReference type="NCBIfam" id="TIGR00171">
    <property type="entry name" value="leuD"/>
    <property type="match status" value="1"/>
</dbReference>
<dbReference type="NCBIfam" id="NF002458">
    <property type="entry name" value="PRK01641.1"/>
    <property type="match status" value="1"/>
</dbReference>
<dbReference type="PANTHER" id="PTHR43345:SF5">
    <property type="entry name" value="3-ISOPROPYLMALATE DEHYDRATASE SMALL SUBUNIT"/>
    <property type="match status" value="1"/>
</dbReference>
<dbReference type="PANTHER" id="PTHR43345">
    <property type="entry name" value="3-ISOPROPYLMALATE DEHYDRATASE SMALL SUBUNIT 2-RELATED-RELATED"/>
    <property type="match status" value="1"/>
</dbReference>
<dbReference type="Pfam" id="PF00694">
    <property type="entry name" value="Aconitase_C"/>
    <property type="match status" value="1"/>
</dbReference>
<dbReference type="SUPFAM" id="SSF52016">
    <property type="entry name" value="LeuD/IlvD-like"/>
    <property type="match status" value="1"/>
</dbReference>
<name>LEUD_SHIF8</name>
<evidence type="ECO:0000255" key="1">
    <source>
        <dbReference type="HAMAP-Rule" id="MF_01031"/>
    </source>
</evidence>
<organism>
    <name type="scientific">Shigella flexneri serotype 5b (strain 8401)</name>
    <dbReference type="NCBI Taxonomy" id="373384"/>
    <lineage>
        <taxon>Bacteria</taxon>
        <taxon>Pseudomonadati</taxon>
        <taxon>Pseudomonadota</taxon>
        <taxon>Gammaproteobacteria</taxon>
        <taxon>Enterobacterales</taxon>
        <taxon>Enterobacteriaceae</taxon>
        <taxon>Shigella</taxon>
    </lineage>
</organism>